<dbReference type="EMBL" id="CU329671">
    <property type="protein sequence ID" value="CAC36914.1"/>
    <property type="molecule type" value="Genomic_DNA"/>
</dbReference>
<dbReference type="RefSeq" id="NP_595047.1">
    <property type="nucleotide sequence ID" value="NM_001020952.2"/>
</dbReference>
<dbReference type="RefSeq" id="NP_595048.1">
    <property type="nucleotide sequence ID" value="NM_001020953.2"/>
</dbReference>
<dbReference type="RefSeq" id="NP_595049.1">
    <property type="nucleotide sequence ID" value="NM_001020954.2"/>
</dbReference>
<dbReference type="RefSeq" id="NP_595050.1">
    <property type="nucleotide sequence ID" value="NM_001020955.2"/>
</dbReference>
<dbReference type="FunCoup" id="P0CT95">
    <property type="interactions" value="75"/>
</dbReference>
<dbReference type="STRING" id="284812.P0CT95"/>
<dbReference type="EnsemblFungi" id="SPBPB10D8.04c.1">
    <property type="protein sequence ID" value="SPBPB10D8.04c.1:pep"/>
    <property type="gene ID" value="SPBPB10D8.04c"/>
</dbReference>
<dbReference type="EnsemblFungi" id="SPBPB10D8.05c.1">
    <property type="protein sequence ID" value="SPBPB10D8.05c.1:pep"/>
    <property type="gene ID" value="SPBPB10D8.05c"/>
</dbReference>
<dbReference type="EnsemblFungi" id="SPBPB10D8.06c.1">
    <property type="protein sequence ID" value="SPBPB10D8.06c.1:pep"/>
    <property type="gene ID" value="SPBPB10D8.06c"/>
</dbReference>
<dbReference type="EnsemblFungi" id="SPBPB10D8.07c.1">
    <property type="protein sequence ID" value="SPBPB10D8.07c.1:pep"/>
    <property type="gene ID" value="SPBPB10D8.07c"/>
</dbReference>
<dbReference type="KEGG" id="spo:2541374"/>
<dbReference type="KEGG" id="spo:2541377"/>
<dbReference type="KEGG" id="spo:2541392"/>
<dbReference type="KEGG" id="spo:2541401"/>
<dbReference type="PomBase" id="SPBPB10D8.05c"/>
<dbReference type="VEuPathDB" id="FungiDB:SPBPB10D8.04c"/>
<dbReference type="VEuPathDB" id="FungiDB:SPBPB10D8.05c"/>
<dbReference type="VEuPathDB" id="FungiDB:SPBPB10D8.06c"/>
<dbReference type="VEuPathDB" id="FungiDB:SPBPB10D8.07c"/>
<dbReference type="InParanoid" id="P0CT95"/>
<dbReference type="OMA" id="WIIDAVI"/>
<dbReference type="PhylomeDB" id="P0CT95"/>
<dbReference type="PRO" id="PR:P0CT95"/>
<dbReference type="Proteomes" id="UP000002485">
    <property type="component" value="Chromosome II"/>
</dbReference>
<dbReference type="GO" id="GO:0005886">
    <property type="term" value="C:plasma membrane"/>
    <property type="evidence" value="ECO:0000318"/>
    <property type="project" value="GO_Central"/>
</dbReference>
<dbReference type="GO" id="GO:0000319">
    <property type="term" value="F:sulfite transmembrane transporter activity"/>
    <property type="evidence" value="ECO:0000318"/>
    <property type="project" value="GO_Central"/>
</dbReference>
<dbReference type="GO" id="GO:0000316">
    <property type="term" value="P:sulfite transmembrane transport"/>
    <property type="evidence" value="ECO:0000318"/>
    <property type="project" value="GO_Central"/>
</dbReference>
<dbReference type="CDD" id="cd09318">
    <property type="entry name" value="TDT_SSU1"/>
    <property type="match status" value="1"/>
</dbReference>
<dbReference type="FunFam" id="1.50.10.150:FF:000004">
    <property type="entry name" value="Malic acid transporter"/>
    <property type="match status" value="1"/>
</dbReference>
<dbReference type="Gene3D" id="1.50.10.150">
    <property type="entry name" value="Voltage-dependent anion channel"/>
    <property type="match status" value="1"/>
</dbReference>
<dbReference type="InterPro" id="IPR004695">
    <property type="entry name" value="SLAC1/Mae1/Ssu1/TehA"/>
</dbReference>
<dbReference type="InterPro" id="IPR051629">
    <property type="entry name" value="Sulfite_efflux_TDT"/>
</dbReference>
<dbReference type="InterPro" id="IPR038665">
    <property type="entry name" value="Voltage-dep_anion_channel_sf"/>
</dbReference>
<dbReference type="PANTHER" id="PTHR31686">
    <property type="match status" value="1"/>
</dbReference>
<dbReference type="PANTHER" id="PTHR31686:SF1">
    <property type="entry name" value="SULFITE EFFLUX PUMP SSU1"/>
    <property type="match status" value="1"/>
</dbReference>
<dbReference type="Pfam" id="PF03595">
    <property type="entry name" value="SLAC1"/>
    <property type="match status" value="1"/>
</dbReference>
<feature type="chain" id="PRO_0000437223" description="Uncharacterized transporter SPBPB10D8.05c">
    <location>
        <begin position="1"/>
        <end position="379"/>
    </location>
</feature>
<feature type="topological domain" description="Cytoplasmic" evidence="1">
    <location>
        <begin position="1"/>
        <end position="15"/>
    </location>
</feature>
<feature type="transmembrane region" description="Helical" evidence="2">
    <location>
        <begin position="16"/>
        <end position="36"/>
    </location>
</feature>
<feature type="topological domain" description="Extracellular" evidence="1">
    <location>
        <begin position="37"/>
        <end position="43"/>
    </location>
</feature>
<feature type="transmembrane region" description="Helical" evidence="2">
    <location>
        <begin position="44"/>
        <end position="64"/>
    </location>
</feature>
<feature type="topological domain" description="Cytoplasmic" evidence="1">
    <location>
        <begin position="65"/>
        <end position="84"/>
    </location>
</feature>
<feature type="transmembrane region" description="Helical" evidence="2">
    <location>
        <begin position="85"/>
        <end position="105"/>
    </location>
</feature>
<feature type="topological domain" description="Extracellular" evidence="1">
    <location>
        <begin position="106"/>
        <end position="116"/>
    </location>
</feature>
<feature type="transmembrane region" description="Helical" evidence="2">
    <location>
        <begin position="117"/>
        <end position="137"/>
    </location>
</feature>
<feature type="topological domain" description="Cytoplasmic" evidence="1">
    <location>
        <begin position="138"/>
        <end position="146"/>
    </location>
</feature>
<feature type="transmembrane region" description="Helical" evidence="2">
    <location>
        <begin position="147"/>
        <end position="167"/>
    </location>
</feature>
<feature type="topological domain" description="Extracellular" evidence="1">
    <location>
        <begin position="168"/>
        <end position="192"/>
    </location>
</feature>
<feature type="transmembrane region" description="Helical" evidence="2">
    <location>
        <begin position="193"/>
        <end position="213"/>
    </location>
</feature>
<feature type="topological domain" description="Cytoplasmic" evidence="1">
    <location>
        <begin position="214"/>
        <end position="224"/>
    </location>
</feature>
<feature type="transmembrane region" description="Helical" evidence="2">
    <location>
        <begin position="225"/>
        <end position="245"/>
    </location>
</feature>
<feature type="topological domain" description="Extracellular" evidence="1">
    <location>
        <begin position="246"/>
        <end position="276"/>
    </location>
</feature>
<feature type="transmembrane region" description="Helical" evidence="2">
    <location>
        <begin position="277"/>
        <end position="297"/>
    </location>
</feature>
<feature type="topological domain" description="Cytoplasmic" evidence="1">
    <location>
        <begin position="298"/>
        <end position="307"/>
    </location>
</feature>
<feature type="transmembrane region" description="Helical" evidence="2">
    <location>
        <begin position="308"/>
        <end position="327"/>
    </location>
</feature>
<feature type="topological domain" description="Extracellular" evidence="1">
    <location>
        <begin position="328"/>
        <end position="332"/>
    </location>
</feature>
<feature type="transmembrane region" description="Helical" evidence="2">
    <location>
        <begin position="333"/>
        <end position="353"/>
    </location>
</feature>
<feature type="topological domain" description="Cytoplasmic" evidence="1">
    <location>
        <begin position="354"/>
        <end position="379"/>
    </location>
</feature>
<comment type="subcellular location">
    <subcellularLocation>
        <location evidence="1 2">Cell membrane</location>
        <topology evidence="1 2">Multi-pass membrane protein</topology>
    </subcellularLocation>
</comment>
<comment type="similarity">
    <text evidence="2">Belongs to the tellurite-resistance/dicarboxylate transporter (TDT) family.</text>
</comment>
<evidence type="ECO:0000250" key="1">
    <source>
        <dbReference type="UniProtKB" id="P41930"/>
    </source>
</evidence>
<evidence type="ECO:0000255" key="2"/>
<protein>
    <recommendedName>
        <fullName>Uncharacterized transporter SPBPB10D8.05c</fullName>
    </recommendedName>
</protein>
<gene>
    <name type="ORF">SPBPB10D8.05c</name>
</gene>
<accession>P0CT95</accession>
<accession>Q9C0Q1</accession>
<organism>
    <name type="scientific">Schizosaccharomyces pombe (strain 972 / ATCC 24843)</name>
    <name type="common">Fission yeast</name>
    <dbReference type="NCBI Taxonomy" id="284812"/>
    <lineage>
        <taxon>Eukaryota</taxon>
        <taxon>Fungi</taxon>
        <taxon>Dikarya</taxon>
        <taxon>Ascomycota</taxon>
        <taxon>Taphrinomycotina</taxon>
        <taxon>Schizosaccharomycetes</taxon>
        <taxon>Schizosaccharomycetales</taxon>
        <taxon>Schizosaccharomycetaceae</taxon>
        <taxon>Schizosaccharomyces</taxon>
    </lineage>
</organism>
<name>YHJ5_SCHPO</name>
<reference key="1">
    <citation type="journal article" date="2002" name="Nature">
        <title>The genome sequence of Schizosaccharomyces pombe.</title>
        <authorList>
            <person name="Wood V."/>
            <person name="Gwilliam R."/>
            <person name="Rajandream M.A."/>
            <person name="Lyne M.H."/>
            <person name="Lyne R."/>
            <person name="Stewart A."/>
            <person name="Sgouros J.G."/>
            <person name="Peat N."/>
            <person name="Hayles J."/>
            <person name="Baker S.G."/>
            <person name="Basham D."/>
            <person name="Bowman S."/>
            <person name="Brooks K."/>
            <person name="Brown D."/>
            <person name="Brown S."/>
            <person name="Chillingworth T."/>
            <person name="Churcher C.M."/>
            <person name="Collins M."/>
            <person name="Connor R."/>
            <person name="Cronin A."/>
            <person name="Davis P."/>
            <person name="Feltwell T."/>
            <person name="Fraser A."/>
            <person name="Gentles S."/>
            <person name="Goble A."/>
            <person name="Hamlin N."/>
            <person name="Harris D.E."/>
            <person name="Hidalgo J."/>
            <person name="Hodgson G."/>
            <person name="Holroyd S."/>
            <person name="Hornsby T."/>
            <person name="Howarth S."/>
            <person name="Huckle E.J."/>
            <person name="Hunt S."/>
            <person name="Jagels K."/>
            <person name="James K.D."/>
            <person name="Jones L."/>
            <person name="Jones M."/>
            <person name="Leather S."/>
            <person name="McDonald S."/>
            <person name="McLean J."/>
            <person name="Mooney P."/>
            <person name="Moule S."/>
            <person name="Mungall K.L."/>
            <person name="Murphy L.D."/>
            <person name="Niblett D."/>
            <person name="Odell C."/>
            <person name="Oliver K."/>
            <person name="O'Neil S."/>
            <person name="Pearson D."/>
            <person name="Quail M.A."/>
            <person name="Rabbinowitsch E."/>
            <person name="Rutherford K.M."/>
            <person name="Rutter S."/>
            <person name="Saunders D."/>
            <person name="Seeger K."/>
            <person name="Sharp S."/>
            <person name="Skelton J."/>
            <person name="Simmonds M.N."/>
            <person name="Squares R."/>
            <person name="Squares S."/>
            <person name="Stevens K."/>
            <person name="Taylor K."/>
            <person name="Taylor R.G."/>
            <person name="Tivey A."/>
            <person name="Walsh S.V."/>
            <person name="Warren T."/>
            <person name="Whitehead S."/>
            <person name="Woodward J.R."/>
            <person name="Volckaert G."/>
            <person name="Aert R."/>
            <person name="Robben J."/>
            <person name="Grymonprez B."/>
            <person name="Weltjens I."/>
            <person name="Vanstreels E."/>
            <person name="Rieger M."/>
            <person name="Schaefer M."/>
            <person name="Mueller-Auer S."/>
            <person name="Gabel C."/>
            <person name="Fuchs M."/>
            <person name="Duesterhoeft A."/>
            <person name="Fritzc C."/>
            <person name="Holzer E."/>
            <person name="Moestl D."/>
            <person name="Hilbert H."/>
            <person name="Borzym K."/>
            <person name="Langer I."/>
            <person name="Beck A."/>
            <person name="Lehrach H."/>
            <person name="Reinhardt R."/>
            <person name="Pohl T.M."/>
            <person name="Eger P."/>
            <person name="Zimmermann W."/>
            <person name="Wedler H."/>
            <person name="Wambutt R."/>
            <person name="Purnelle B."/>
            <person name="Goffeau A."/>
            <person name="Cadieu E."/>
            <person name="Dreano S."/>
            <person name="Gloux S."/>
            <person name="Lelaure V."/>
            <person name="Mottier S."/>
            <person name="Galibert F."/>
            <person name="Aves S.J."/>
            <person name="Xiang Z."/>
            <person name="Hunt C."/>
            <person name="Moore K."/>
            <person name="Hurst S.M."/>
            <person name="Lucas M."/>
            <person name="Rochet M."/>
            <person name="Gaillardin C."/>
            <person name="Tallada V.A."/>
            <person name="Garzon A."/>
            <person name="Thode G."/>
            <person name="Daga R.R."/>
            <person name="Cruzado L."/>
            <person name="Jimenez J."/>
            <person name="Sanchez M."/>
            <person name="del Rey F."/>
            <person name="Benito J."/>
            <person name="Dominguez A."/>
            <person name="Revuelta J.L."/>
            <person name="Moreno S."/>
            <person name="Armstrong J."/>
            <person name="Forsburg S.L."/>
            <person name="Cerutti L."/>
            <person name="Lowe T."/>
            <person name="McCombie W.R."/>
            <person name="Paulsen I."/>
            <person name="Potashkin J."/>
            <person name="Shpakovski G.V."/>
            <person name="Ussery D."/>
            <person name="Barrell B.G."/>
            <person name="Nurse P."/>
        </authorList>
    </citation>
    <scope>NUCLEOTIDE SEQUENCE [LARGE SCALE GENOMIC DNA]</scope>
    <source>
        <strain>972 / ATCC 24843</strain>
    </source>
</reference>
<sequence length="379" mass="43121">MSWFYRFFIRDYQNCWMVSIMGTGLSANVLHNFPFAARWLRICSYIMFGFALVCLFTNTIVFFFKHTIYRGTLIQKEEFIDVPNTLFLGCYTMGFQSCINMLCFLSSQSSPQGWINFLYILWIFSVAMSFFTAWVIFSTILTKRAKIEFSTFLPTILLPIVPLTVAASTGSVVIETFSTRLNKKIILNTIVTSFICWSNAIALGFCIIACILWRMIFFKVPARALIFTQFVPIGVLGQGAFGIIMQAINAKTFALSYYQQIPMIEFYSNCVLVQSLILSLFLISFGYFFTFFAVFSVINYGFRHKFTVAWWAMTFPLGTMSISNTQLSKVTNIIFFRVIGAIYGTALILITIVCIVGNTIMAIQKLKSETSSKNLVGII</sequence>
<proteinExistence type="inferred from homology"/>
<keyword id="KW-1003">Cell membrane</keyword>
<keyword id="KW-0472">Membrane</keyword>
<keyword id="KW-1185">Reference proteome</keyword>
<keyword id="KW-0812">Transmembrane</keyword>
<keyword id="KW-1133">Transmembrane helix</keyword>
<keyword id="KW-0813">Transport</keyword>